<sequence length="485" mass="52935">MDKAVSKTNRMAAEISQHGVKEYLAQQQHKGLLRFLTCGSVDDGKSTLIGRLLHDSAQIYEDQLASLKNDSAKMGTTGEAIDLALLVDGLQAEREQGITIDVAYRYFSSDKRKFIIADTPGHEQYTRNMATGASTCDLAVILVDARYGVQTQTKRHAFIASLLGIRHFVVAINKMDLLGFDEQVFNRIRNDFSEFVKGFGELDIHFVPLSALNGDNVVEPSLHTPWYQGGTLLELLETIDTQRELSALPARFPVQYVSRPNLDFRGFAGTLASGVIKVGDQVVALPSGKRSKVERIVTFDGDLPEVTAGQAVTITLEDEIDISRGDLLALPDSAPQVANQIIADLVWMDEKPLQLGQLYDIKVAGKKTQASVTAIDYVVDVNTLARSSAASVEGEGLGLNAIARVTLELTEDIVFDAYSLVRDTGGMILIDRLSNATVAAVMVVSGQHVSKQVSSPFSAFELEFNALVRKHFPHWQAIDISKLGA</sequence>
<name>CYSN_SHEON</name>
<evidence type="ECO:0000250" key="1"/>
<evidence type="ECO:0000255" key="2">
    <source>
        <dbReference type="HAMAP-Rule" id="MF_00062"/>
    </source>
</evidence>
<accession>Q8EB10</accession>
<gene>
    <name evidence="2" type="primary">cysN</name>
    <name type="ordered locus">SO_3726</name>
</gene>
<proteinExistence type="inferred from homology"/>
<keyword id="KW-0067">ATP-binding</keyword>
<keyword id="KW-0342">GTP-binding</keyword>
<keyword id="KW-0547">Nucleotide-binding</keyword>
<keyword id="KW-0548">Nucleotidyltransferase</keyword>
<keyword id="KW-1185">Reference proteome</keyword>
<keyword id="KW-0808">Transferase</keyword>
<organism>
    <name type="scientific">Shewanella oneidensis (strain ATCC 700550 / JCM 31522 / CIP 106686 / LMG 19005 / NCIMB 14063 / MR-1)</name>
    <dbReference type="NCBI Taxonomy" id="211586"/>
    <lineage>
        <taxon>Bacteria</taxon>
        <taxon>Pseudomonadati</taxon>
        <taxon>Pseudomonadota</taxon>
        <taxon>Gammaproteobacteria</taxon>
        <taxon>Alteromonadales</taxon>
        <taxon>Shewanellaceae</taxon>
        <taxon>Shewanella</taxon>
    </lineage>
</organism>
<comment type="function">
    <text evidence="2">With CysD forms the ATP sulfurylase (ATPS) that catalyzes the adenylation of sulfate producing adenosine 5'-phosphosulfate (APS) and diphosphate, the first enzymatic step in sulfur assimilation pathway. APS synthesis involves the formation of a high-energy phosphoric-sulfuric acid anhydride bond driven by GTP hydrolysis by CysN coupled to ATP hydrolysis by CysD.</text>
</comment>
<comment type="catalytic activity">
    <reaction evidence="2">
        <text>sulfate + ATP + H(+) = adenosine 5'-phosphosulfate + diphosphate</text>
        <dbReference type="Rhea" id="RHEA:18133"/>
        <dbReference type="ChEBI" id="CHEBI:15378"/>
        <dbReference type="ChEBI" id="CHEBI:16189"/>
        <dbReference type="ChEBI" id="CHEBI:30616"/>
        <dbReference type="ChEBI" id="CHEBI:33019"/>
        <dbReference type="ChEBI" id="CHEBI:58243"/>
        <dbReference type="EC" id="2.7.7.4"/>
    </reaction>
</comment>
<comment type="pathway">
    <text evidence="2">Sulfur metabolism; hydrogen sulfide biosynthesis; sulfite from sulfate: step 1/3.</text>
</comment>
<comment type="subunit">
    <text evidence="2">Heterodimer composed of CysD, the smaller subunit, and CysN.</text>
</comment>
<comment type="similarity">
    <text evidence="2">Belongs to the TRAFAC class translation factor GTPase superfamily. Classic translation factor GTPase family. CysN/NodQ subfamily.</text>
</comment>
<feature type="chain" id="PRO_0000091530" description="Sulfate adenylyltransferase subunit 1">
    <location>
        <begin position="1"/>
        <end position="485"/>
    </location>
</feature>
<feature type="domain" description="tr-type G">
    <location>
        <begin position="30"/>
        <end position="243"/>
    </location>
</feature>
<feature type="region of interest" description="G1" evidence="1">
    <location>
        <begin position="39"/>
        <end position="46"/>
    </location>
</feature>
<feature type="region of interest" description="G2" evidence="1">
    <location>
        <begin position="97"/>
        <end position="101"/>
    </location>
</feature>
<feature type="region of interest" description="G3" evidence="1">
    <location>
        <begin position="118"/>
        <end position="121"/>
    </location>
</feature>
<feature type="region of interest" description="G4" evidence="1">
    <location>
        <begin position="173"/>
        <end position="176"/>
    </location>
</feature>
<feature type="region of interest" description="G5" evidence="1">
    <location>
        <begin position="210"/>
        <end position="212"/>
    </location>
</feature>
<feature type="binding site" evidence="2">
    <location>
        <begin position="39"/>
        <end position="46"/>
    </location>
    <ligand>
        <name>GTP</name>
        <dbReference type="ChEBI" id="CHEBI:37565"/>
    </ligand>
</feature>
<feature type="binding site" evidence="2">
    <location>
        <begin position="118"/>
        <end position="122"/>
    </location>
    <ligand>
        <name>GTP</name>
        <dbReference type="ChEBI" id="CHEBI:37565"/>
    </ligand>
</feature>
<feature type="binding site" evidence="2">
    <location>
        <begin position="173"/>
        <end position="176"/>
    </location>
    <ligand>
        <name>GTP</name>
        <dbReference type="ChEBI" id="CHEBI:37565"/>
    </ligand>
</feature>
<reference key="1">
    <citation type="journal article" date="2002" name="Nat. Biotechnol.">
        <title>Genome sequence of the dissimilatory metal ion-reducing bacterium Shewanella oneidensis.</title>
        <authorList>
            <person name="Heidelberg J.F."/>
            <person name="Paulsen I.T."/>
            <person name="Nelson K.E."/>
            <person name="Gaidos E.J."/>
            <person name="Nelson W.C."/>
            <person name="Read T.D."/>
            <person name="Eisen J.A."/>
            <person name="Seshadri R."/>
            <person name="Ward N.L."/>
            <person name="Methe B.A."/>
            <person name="Clayton R.A."/>
            <person name="Meyer T."/>
            <person name="Tsapin A."/>
            <person name="Scott J."/>
            <person name="Beanan M.J."/>
            <person name="Brinkac L.M."/>
            <person name="Daugherty S.C."/>
            <person name="DeBoy R.T."/>
            <person name="Dodson R.J."/>
            <person name="Durkin A.S."/>
            <person name="Haft D.H."/>
            <person name="Kolonay J.F."/>
            <person name="Madupu R."/>
            <person name="Peterson J.D."/>
            <person name="Umayam L.A."/>
            <person name="White O."/>
            <person name="Wolf A.M."/>
            <person name="Vamathevan J.J."/>
            <person name="Weidman J.F."/>
            <person name="Impraim M."/>
            <person name="Lee K."/>
            <person name="Berry K.J."/>
            <person name="Lee C."/>
            <person name="Mueller J."/>
            <person name="Khouri H.M."/>
            <person name="Gill J."/>
            <person name="Utterback T.R."/>
            <person name="McDonald L.A."/>
            <person name="Feldblyum T.V."/>
            <person name="Smith H.O."/>
            <person name="Venter J.C."/>
            <person name="Nealson K.H."/>
            <person name="Fraser C.M."/>
        </authorList>
    </citation>
    <scope>NUCLEOTIDE SEQUENCE [LARGE SCALE GENOMIC DNA]</scope>
    <source>
        <strain>ATCC 700550 / JCM 31522 / CIP 106686 / LMG 19005 / NCIMB 14063 / MR-1</strain>
    </source>
</reference>
<dbReference type="EC" id="2.7.7.4" evidence="2"/>
<dbReference type="EMBL" id="AE014299">
    <property type="protein sequence ID" value="AAN56710.2"/>
    <property type="molecule type" value="Genomic_DNA"/>
</dbReference>
<dbReference type="RefSeq" id="NP_719266.2">
    <property type="nucleotide sequence ID" value="NC_004347.2"/>
</dbReference>
<dbReference type="RefSeq" id="WP_011073512.1">
    <property type="nucleotide sequence ID" value="NC_004347.2"/>
</dbReference>
<dbReference type="SMR" id="Q8EB10"/>
<dbReference type="STRING" id="211586.SO_3726"/>
<dbReference type="PaxDb" id="211586-SO_3726"/>
<dbReference type="KEGG" id="son:SO_3726"/>
<dbReference type="PATRIC" id="fig|211586.12.peg.3608"/>
<dbReference type="eggNOG" id="COG2895">
    <property type="taxonomic scope" value="Bacteria"/>
</dbReference>
<dbReference type="HOGENOM" id="CLU_007265_5_2_6"/>
<dbReference type="OrthoDB" id="9804504at2"/>
<dbReference type="PhylomeDB" id="Q8EB10"/>
<dbReference type="BioCyc" id="SONE211586:G1GMP-3463-MONOMER"/>
<dbReference type="UniPathway" id="UPA00140">
    <property type="reaction ID" value="UER00204"/>
</dbReference>
<dbReference type="Proteomes" id="UP000008186">
    <property type="component" value="Chromosome"/>
</dbReference>
<dbReference type="GO" id="GO:0005524">
    <property type="term" value="F:ATP binding"/>
    <property type="evidence" value="ECO:0007669"/>
    <property type="project" value="UniProtKB-KW"/>
</dbReference>
<dbReference type="GO" id="GO:0005525">
    <property type="term" value="F:GTP binding"/>
    <property type="evidence" value="ECO:0007669"/>
    <property type="project" value="UniProtKB-UniRule"/>
</dbReference>
<dbReference type="GO" id="GO:0003924">
    <property type="term" value="F:GTPase activity"/>
    <property type="evidence" value="ECO:0007669"/>
    <property type="project" value="InterPro"/>
</dbReference>
<dbReference type="GO" id="GO:0004781">
    <property type="term" value="F:sulfate adenylyltransferase (ATP) activity"/>
    <property type="evidence" value="ECO:0007669"/>
    <property type="project" value="UniProtKB-UniRule"/>
</dbReference>
<dbReference type="GO" id="GO:0070814">
    <property type="term" value="P:hydrogen sulfide biosynthetic process"/>
    <property type="evidence" value="ECO:0007669"/>
    <property type="project" value="UniProtKB-UniRule"/>
</dbReference>
<dbReference type="GO" id="GO:0000103">
    <property type="term" value="P:sulfate assimilation"/>
    <property type="evidence" value="ECO:0007669"/>
    <property type="project" value="UniProtKB-UniRule"/>
</dbReference>
<dbReference type="GO" id="GO:0006790">
    <property type="term" value="P:sulfur compound metabolic process"/>
    <property type="evidence" value="ECO:0000318"/>
    <property type="project" value="GO_Central"/>
</dbReference>
<dbReference type="CDD" id="cd04166">
    <property type="entry name" value="CysN_ATPS"/>
    <property type="match status" value="1"/>
</dbReference>
<dbReference type="CDD" id="cd03695">
    <property type="entry name" value="CysN_NodQ_II"/>
    <property type="match status" value="1"/>
</dbReference>
<dbReference type="CDD" id="cd04095">
    <property type="entry name" value="CysN_NoDQ_III"/>
    <property type="match status" value="1"/>
</dbReference>
<dbReference type="FunFam" id="2.40.30.10:FF:000027">
    <property type="entry name" value="Sulfate adenylyltransferase subunit 1"/>
    <property type="match status" value="1"/>
</dbReference>
<dbReference type="FunFam" id="3.40.50.300:FF:000119">
    <property type="entry name" value="Sulfate adenylyltransferase subunit 1"/>
    <property type="match status" value="1"/>
</dbReference>
<dbReference type="Gene3D" id="3.40.50.300">
    <property type="entry name" value="P-loop containing nucleotide triphosphate hydrolases"/>
    <property type="match status" value="1"/>
</dbReference>
<dbReference type="Gene3D" id="2.40.30.10">
    <property type="entry name" value="Translation factors"/>
    <property type="match status" value="2"/>
</dbReference>
<dbReference type="HAMAP" id="MF_00062">
    <property type="entry name" value="Sulf_adenylyltr_sub1"/>
    <property type="match status" value="1"/>
</dbReference>
<dbReference type="InterPro" id="IPR041757">
    <property type="entry name" value="CysN_GTP-bd"/>
</dbReference>
<dbReference type="InterPro" id="IPR044138">
    <property type="entry name" value="CysN_II"/>
</dbReference>
<dbReference type="InterPro" id="IPR044139">
    <property type="entry name" value="CysN_NoDQ_III"/>
</dbReference>
<dbReference type="InterPro" id="IPR031157">
    <property type="entry name" value="G_TR_CS"/>
</dbReference>
<dbReference type="InterPro" id="IPR054696">
    <property type="entry name" value="GTP-eEF1A_C"/>
</dbReference>
<dbReference type="InterPro" id="IPR027417">
    <property type="entry name" value="P-loop_NTPase"/>
</dbReference>
<dbReference type="InterPro" id="IPR011779">
    <property type="entry name" value="SO4_adenylTrfase_lsu"/>
</dbReference>
<dbReference type="InterPro" id="IPR000795">
    <property type="entry name" value="T_Tr_GTP-bd_dom"/>
</dbReference>
<dbReference type="InterPro" id="IPR050100">
    <property type="entry name" value="TRAFAC_GTPase_members"/>
</dbReference>
<dbReference type="InterPro" id="IPR009000">
    <property type="entry name" value="Transl_B-barrel_sf"/>
</dbReference>
<dbReference type="InterPro" id="IPR009001">
    <property type="entry name" value="Transl_elong_EF1A/Init_IF2_C"/>
</dbReference>
<dbReference type="NCBIfam" id="TIGR02034">
    <property type="entry name" value="CysN"/>
    <property type="match status" value="1"/>
</dbReference>
<dbReference type="NCBIfam" id="NF003478">
    <property type="entry name" value="PRK05124.1"/>
    <property type="match status" value="1"/>
</dbReference>
<dbReference type="PANTHER" id="PTHR23115">
    <property type="entry name" value="TRANSLATION FACTOR"/>
    <property type="match status" value="1"/>
</dbReference>
<dbReference type="Pfam" id="PF22594">
    <property type="entry name" value="GTP-eEF1A_C"/>
    <property type="match status" value="1"/>
</dbReference>
<dbReference type="Pfam" id="PF00009">
    <property type="entry name" value="GTP_EFTU"/>
    <property type="match status" value="1"/>
</dbReference>
<dbReference type="PRINTS" id="PR00315">
    <property type="entry name" value="ELONGATNFCT"/>
</dbReference>
<dbReference type="SUPFAM" id="SSF50465">
    <property type="entry name" value="EF-Tu/eEF-1alpha/eIF2-gamma C-terminal domain"/>
    <property type="match status" value="1"/>
</dbReference>
<dbReference type="SUPFAM" id="SSF52540">
    <property type="entry name" value="P-loop containing nucleoside triphosphate hydrolases"/>
    <property type="match status" value="1"/>
</dbReference>
<dbReference type="SUPFAM" id="SSF50447">
    <property type="entry name" value="Translation proteins"/>
    <property type="match status" value="1"/>
</dbReference>
<dbReference type="PROSITE" id="PS00301">
    <property type="entry name" value="G_TR_1"/>
    <property type="match status" value="1"/>
</dbReference>
<dbReference type="PROSITE" id="PS51722">
    <property type="entry name" value="G_TR_2"/>
    <property type="match status" value="1"/>
</dbReference>
<protein>
    <recommendedName>
        <fullName evidence="2">Sulfate adenylyltransferase subunit 1</fullName>
        <ecNumber evidence="2">2.7.7.4</ecNumber>
    </recommendedName>
    <alternativeName>
        <fullName evidence="2">ATP-sulfurylase large subunit</fullName>
    </alternativeName>
    <alternativeName>
        <fullName evidence="2">Sulfate adenylate transferase</fullName>
        <shortName evidence="2">SAT</shortName>
    </alternativeName>
</protein>